<evidence type="ECO:0000255" key="1">
    <source>
        <dbReference type="HAMAP-Rule" id="MF_00303"/>
    </source>
</evidence>
<sequence>MNYEVKKLEKSAVEVKLHLTAEEVKPIVDKVLAHVGEHAEVAGFRKGHAPKEVLMTNYKDHIESDVANDAINANFPEIVDKEKLEPVSYVRLKEINLKDDLNLTFDIDVYPQFELGNYKGLEAEKKSFEMTDDLLKEELEIMVRNHAKLEEVEDAGYKAQLDDTVDLAFEGFMDGAPFPGGKAESHLLKLGSKSFIDNFEEQLVGYTKGQEGEITVKFPAEYHAAELAGKPAQFKVKINAIKKLRQPELNDDFAKELGYASLDELKAKTKEETTKRENDRIENEYVSALLDKLMETTTIDVPVSMVQAEIQNRLKELEYQLSMQGFKMDDYLKMMGGNVETFAAQLAPAAEKKVKIDLILDRIAKDNNFEATDEELNQRMEEIAKMYGMDVPALEEELKKNKNLENFKASVKYDIVMKKAIDEVVKNAK</sequence>
<protein>
    <recommendedName>
        <fullName evidence="1">Trigger factor</fullName>
        <shortName evidence="1">TF</shortName>
        <ecNumber evidence="1">5.2.1.8</ecNumber>
    </recommendedName>
    <alternativeName>
        <fullName evidence="1">PPIase</fullName>
    </alternativeName>
</protein>
<dbReference type="EC" id="5.2.1.8" evidence="1"/>
<dbReference type="EMBL" id="AE009951">
    <property type="protein sequence ID" value="AAL94107.1"/>
    <property type="molecule type" value="Genomic_DNA"/>
</dbReference>
<dbReference type="RefSeq" id="NP_602808.1">
    <property type="nucleotide sequence ID" value="NC_003454.1"/>
</dbReference>
<dbReference type="RefSeq" id="WP_011015985.1">
    <property type="nucleotide sequence ID" value="NZ_OZ209243.1"/>
</dbReference>
<dbReference type="SMR" id="Q8R5Z2"/>
<dbReference type="FunCoup" id="Q8R5Z2">
    <property type="interactions" value="424"/>
</dbReference>
<dbReference type="STRING" id="190304.FN2017"/>
<dbReference type="PaxDb" id="190304-FN2017"/>
<dbReference type="EnsemblBacteria" id="AAL94107">
    <property type="protein sequence ID" value="AAL94107"/>
    <property type="gene ID" value="FN2017"/>
</dbReference>
<dbReference type="GeneID" id="79782976"/>
<dbReference type="KEGG" id="fnu:FN2017"/>
<dbReference type="PATRIC" id="fig|190304.8.peg.485"/>
<dbReference type="eggNOG" id="COG0544">
    <property type="taxonomic scope" value="Bacteria"/>
</dbReference>
<dbReference type="HOGENOM" id="CLU_033058_3_2_0"/>
<dbReference type="InParanoid" id="Q8R5Z2"/>
<dbReference type="BioCyc" id="FNUC190304:G1FZS-504-MONOMER"/>
<dbReference type="Proteomes" id="UP000002521">
    <property type="component" value="Chromosome"/>
</dbReference>
<dbReference type="GO" id="GO:0005737">
    <property type="term" value="C:cytoplasm"/>
    <property type="evidence" value="ECO:0007669"/>
    <property type="project" value="UniProtKB-SubCell"/>
</dbReference>
<dbReference type="GO" id="GO:0003755">
    <property type="term" value="F:peptidyl-prolyl cis-trans isomerase activity"/>
    <property type="evidence" value="ECO:0000318"/>
    <property type="project" value="GO_Central"/>
</dbReference>
<dbReference type="GO" id="GO:0044183">
    <property type="term" value="F:protein folding chaperone"/>
    <property type="evidence" value="ECO:0000318"/>
    <property type="project" value="GO_Central"/>
</dbReference>
<dbReference type="GO" id="GO:0043022">
    <property type="term" value="F:ribosome binding"/>
    <property type="evidence" value="ECO:0000318"/>
    <property type="project" value="GO_Central"/>
</dbReference>
<dbReference type="GO" id="GO:0051083">
    <property type="term" value="P:'de novo' cotranslational protein folding"/>
    <property type="evidence" value="ECO:0000318"/>
    <property type="project" value="GO_Central"/>
</dbReference>
<dbReference type="GO" id="GO:0051301">
    <property type="term" value="P:cell division"/>
    <property type="evidence" value="ECO:0007669"/>
    <property type="project" value="UniProtKB-KW"/>
</dbReference>
<dbReference type="GO" id="GO:0061077">
    <property type="term" value="P:chaperone-mediated protein folding"/>
    <property type="evidence" value="ECO:0000318"/>
    <property type="project" value="GO_Central"/>
</dbReference>
<dbReference type="GO" id="GO:0015031">
    <property type="term" value="P:protein transport"/>
    <property type="evidence" value="ECO:0007669"/>
    <property type="project" value="UniProtKB-UniRule"/>
</dbReference>
<dbReference type="GO" id="GO:0043335">
    <property type="term" value="P:protein unfolding"/>
    <property type="evidence" value="ECO:0000318"/>
    <property type="project" value="GO_Central"/>
</dbReference>
<dbReference type="FunFam" id="3.10.50.40:FF:000001">
    <property type="entry name" value="Trigger factor"/>
    <property type="match status" value="1"/>
</dbReference>
<dbReference type="Gene3D" id="3.10.50.40">
    <property type="match status" value="1"/>
</dbReference>
<dbReference type="Gene3D" id="3.30.70.1050">
    <property type="entry name" value="Trigger factor ribosome-binding domain"/>
    <property type="match status" value="1"/>
</dbReference>
<dbReference type="Gene3D" id="1.10.3120.10">
    <property type="entry name" value="Trigger factor, C-terminal domain"/>
    <property type="match status" value="1"/>
</dbReference>
<dbReference type="HAMAP" id="MF_00303">
    <property type="entry name" value="Trigger_factor_Tig"/>
    <property type="match status" value="1"/>
</dbReference>
<dbReference type="InterPro" id="IPR046357">
    <property type="entry name" value="PPIase_dom_sf"/>
</dbReference>
<dbReference type="InterPro" id="IPR001179">
    <property type="entry name" value="PPIase_FKBP_dom"/>
</dbReference>
<dbReference type="InterPro" id="IPR005215">
    <property type="entry name" value="Trig_fac"/>
</dbReference>
<dbReference type="InterPro" id="IPR008880">
    <property type="entry name" value="Trigger_fac_C"/>
</dbReference>
<dbReference type="InterPro" id="IPR037041">
    <property type="entry name" value="Trigger_fac_C_sf"/>
</dbReference>
<dbReference type="InterPro" id="IPR008881">
    <property type="entry name" value="Trigger_fac_ribosome-bd_bac"/>
</dbReference>
<dbReference type="InterPro" id="IPR036611">
    <property type="entry name" value="Trigger_fac_ribosome-bd_sf"/>
</dbReference>
<dbReference type="InterPro" id="IPR027304">
    <property type="entry name" value="Trigger_fact/SurA_dom_sf"/>
</dbReference>
<dbReference type="NCBIfam" id="TIGR00115">
    <property type="entry name" value="tig"/>
    <property type="match status" value="1"/>
</dbReference>
<dbReference type="PANTHER" id="PTHR30560">
    <property type="entry name" value="TRIGGER FACTOR CHAPERONE AND PEPTIDYL-PROLYL CIS/TRANS ISOMERASE"/>
    <property type="match status" value="1"/>
</dbReference>
<dbReference type="PANTHER" id="PTHR30560:SF3">
    <property type="entry name" value="TRIGGER FACTOR-LIKE PROTEIN TIG, CHLOROPLASTIC"/>
    <property type="match status" value="1"/>
</dbReference>
<dbReference type="Pfam" id="PF00254">
    <property type="entry name" value="FKBP_C"/>
    <property type="match status" value="1"/>
</dbReference>
<dbReference type="Pfam" id="PF05698">
    <property type="entry name" value="Trigger_C"/>
    <property type="match status" value="1"/>
</dbReference>
<dbReference type="Pfam" id="PF05697">
    <property type="entry name" value="Trigger_N"/>
    <property type="match status" value="1"/>
</dbReference>
<dbReference type="PIRSF" id="PIRSF003095">
    <property type="entry name" value="Trigger_factor"/>
    <property type="match status" value="1"/>
</dbReference>
<dbReference type="SUPFAM" id="SSF54534">
    <property type="entry name" value="FKBP-like"/>
    <property type="match status" value="1"/>
</dbReference>
<dbReference type="SUPFAM" id="SSF109998">
    <property type="entry name" value="Triger factor/SurA peptide-binding domain-like"/>
    <property type="match status" value="1"/>
</dbReference>
<dbReference type="SUPFAM" id="SSF102735">
    <property type="entry name" value="Trigger factor ribosome-binding domain"/>
    <property type="match status" value="1"/>
</dbReference>
<keyword id="KW-0131">Cell cycle</keyword>
<keyword id="KW-0132">Cell division</keyword>
<keyword id="KW-0143">Chaperone</keyword>
<keyword id="KW-0963">Cytoplasm</keyword>
<keyword id="KW-0413">Isomerase</keyword>
<keyword id="KW-1185">Reference proteome</keyword>
<keyword id="KW-0697">Rotamase</keyword>
<gene>
    <name evidence="1" type="primary">tig</name>
    <name type="ordered locus">FN2017</name>
</gene>
<accession>Q8R5Z2</accession>
<comment type="function">
    <text evidence="1">Involved in protein export. Acts as a chaperone by maintaining the newly synthesized protein in an open conformation. Functions as a peptidyl-prolyl cis-trans isomerase.</text>
</comment>
<comment type="catalytic activity">
    <reaction evidence="1">
        <text>[protein]-peptidylproline (omega=180) = [protein]-peptidylproline (omega=0)</text>
        <dbReference type="Rhea" id="RHEA:16237"/>
        <dbReference type="Rhea" id="RHEA-COMP:10747"/>
        <dbReference type="Rhea" id="RHEA-COMP:10748"/>
        <dbReference type="ChEBI" id="CHEBI:83833"/>
        <dbReference type="ChEBI" id="CHEBI:83834"/>
        <dbReference type="EC" id="5.2.1.8"/>
    </reaction>
</comment>
<comment type="subcellular location">
    <subcellularLocation>
        <location>Cytoplasm</location>
    </subcellularLocation>
    <text evidence="1">About half TF is bound to the ribosome near the polypeptide exit tunnel while the other half is free in the cytoplasm.</text>
</comment>
<comment type="domain">
    <text evidence="1">Consists of 3 domains; the N-terminus binds the ribosome, the middle domain has PPIase activity, while the C-terminus has intrinsic chaperone activity on its own.</text>
</comment>
<comment type="similarity">
    <text evidence="1">Belongs to the FKBP-type PPIase family. Tig subfamily.</text>
</comment>
<proteinExistence type="inferred from homology"/>
<feature type="chain" id="PRO_0000179355" description="Trigger factor">
    <location>
        <begin position="1"/>
        <end position="429"/>
    </location>
</feature>
<feature type="domain" description="PPIase FKBP-type" evidence="1">
    <location>
        <begin position="162"/>
        <end position="247"/>
    </location>
</feature>
<reference key="1">
    <citation type="journal article" date="2002" name="J. Bacteriol.">
        <title>Genome sequence and analysis of the oral bacterium Fusobacterium nucleatum strain ATCC 25586.</title>
        <authorList>
            <person name="Kapatral V."/>
            <person name="Anderson I."/>
            <person name="Ivanova N."/>
            <person name="Reznik G."/>
            <person name="Los T."/>
            <person name="Lykidis A."/>
            <person name="Bhattacharyya A."/>
            <person name="Bartman A."/>
            <person name="Gardner W."/>
            <person name="Grechkin G."/>
            <person name="Zhu L."/>
            <person name="Vasieva O."/>
            <person name="Chu L."/>
            <person name="Kogan Y."/>
            <person name="Chaga O."/>
            <person name="Goltsman E."/>
            <person name="Bernal A."/>
            <person name="Larsen N."/>
            <person name="D'Souza M."/>
            <person name="Walunas T."/>
            <person name="Pusch G."/>
            <person name="Haselkorn R."/>
            <person name="Fonstein M."/>
            <person name="Kyrpides N.C."/>
            <person name="Overbeek R."/>
        </authorList>
    </citation>
    <scope>NUCLEOTIDE SEQUENCE [LARGE SCALE GENOMIC DNA]</scope>
    <source>
        <strain>ATCC 25586 / DSM 15643 / BCRC 10681 / CIP 101130 / JCM 8532 / KCTC 2640 / LMG 13131 / VPI 4355</strain>
    </source>
</reference>
<name>TIG_FUSNN</name>
<organism>
    <name type="scientific">Fusobacterium nucleatum subsp. nucleatum (strain ATCC 25586 / DSM 15643 / BCRC 10681 / CIP 101130 / JCM 8532 / KCTC 2640 / LMG 13131 / VPI 4355)</name>
    <dbReference type="NCBI Taxonomy" id="190304"/>
    <lineage>
        <taxon>Bacteria</taxon>
        <taxon>Fusobacteriati</taxon>
        <taxon>Fusobacteriota</taxon>
        <taxon>Fusobacteriia</taxon>
        <taxon>Fusobacteriales</taxon>
        <taxon>Fusobacteriaceae</taxon>
        <taxon>Fusobacterium</taxon>
    </lineage>
</organism>